<name>CTL2_PONAB</name>
<proteinExistence type="evidence at transcript level"/>
<keyword id="KW-0050">Antiport</keyword>
<keyword id="KW-1003">Cell membrane</keyword>
<keyword id="KW-0325">Glycoprotein</keyword>
<keyword id="KW-0472">Membrane</keyword>
<keyword id="KW-0496">Mitochondrion</keyword>
<keyword id="KW-1000">Mitochondrion outer membrane</keyword>
<keyword id="KW-0597">Phosphoprotein</keyword>
<keyword id="KW-1185">Reference proteome</keyword>
<keyword id="KW-0812">Transmembrane</keyword>
<keyword id="KW-1133">Transmembrane helix</keyword>
<keyword id="KW-0813">Transport</keyword>
<organism>
    <name type="scientific">Pongo abelii</name>
    <name type="common">Sumatran orangutan</name>
    <name type="synonym">Pongo pygmaeus abelii</name>
    <dbReference type="NCBI Taxonomy" id="9601"/>
    <lineage>
        <taxon>Eukaryota</taxon>
        <taxon>Metazoa</taxon>
        <taxon>Chordata</taxon>
        <taxon>Craniata</taxon>
        <taxon>Vertebrata</taxon>
        <taxon>Euteleostomi</taxon>
        <taxon>Mammalia</taxon>
        <taxon>Eutheria</taxon>
        <taxon>Euarchontoglires</taxon>
        <taxon>Primates</taxon>
        <taxon>Haplorrhini</taxon>
        <taxon>Catarrhini</taxon>
        <taxon>Hominidae</taxon>
        <taxon>Pongo</taxon>
    </lineage>
</organism>
<reference key="1">
    <citation type="submission" date="2004-11" db="EMBL/GenBank/DDBJ databases">
        <authorList>
            <consortium name="The German cDNA consortium"/>
        </authorList>
    </citation>
    <scope>NUCLEOTIDE SEQUENCE [LARGE SCALE MRNA]</scope>
    <source>
        <tissue>Kidney</tissue>
    </source>
</reference>
<evidence type="ECO:0000250" key="1"/>
<evidence type="ECO:0000250" key="2">
    <source>
        <dbReference type="UniProtKB" id="B4F795"/>
    </source>
</evidence>
<evidence type="ECO:0000250" key="3">
    <source>
        <dbReference type="UniProtKB" id="Q8IWA5"/>
    </source>
</evidence>
<evidence type="ECO:0000255" key="4"/>
<evidence type="ECO:0000305" key="5"/>
<accession>Q5R5L9</accession>
<feature type="chain" id="PRO_0000191719" description="Choline transporter-like protein 2">
    <location>
        <begin position="1"/>
        <end position="711"/>
    </location>
</feature>
<feature type="topological domain" description="Cytoplasmic" evidence="4">
    <location>
        <begin position="1"/>
        <end position="33"/>
    </location>
</feature>
<feature type="transmembrane region" description="Helical" evidence="4">
    <location>
        <begin position="34"/>
        <end position="54"/>
    </location>
</feature>
<feature type="topological domain" description="Extracellular" evidence="4">
    <location>
        <begin position="55"/>
        <end position="232"/>
    </location>
</feature>
<feature type="transmembrane region" description="Helical" evidence="4">
    <location>
        <begin position="233"/>
        <end position="253"/>
    </location>
</feature>
<feature type="topological domain" description="Cytoplasmic" evidence="4">
    <location>
        <begin position="254"/>
        <end position="256"/>
    </location>
</feature>
<feature type="transmembrane region" description="Helical" evidence="4">
    <location>
        <begin position="257"/>
        <end position="277"/>
    </location>
</feature>
<feature type="topological domain" description="Extracellular" evidence="4">
    <location>
        <begin position="278"/>
        <end position="315"/>
    </location>
</feature>
<feature type="transmembrane region" description="Helical" evidence="4">
    <location>
        <begin position="316"/>
        <end position="336"/>
    </location>
</feature>
<feature type="topological domain" description="Cytoplasmic" evidence="4">
    <location>
        <begin position="337"/>
        <end position="364"/>
    </location>
</feature>
<feature type="transmembrane region" description="Helical" evidence="4">
    <location>
        <begin position="365"/>
        <end position="385"/>
    </location>
</feature>
<feature type="topological domain" description="Extracellular" evidence="4">
    <location>
        <begin position="386"/>
        <end position="440"/>
    </location>
</feature>
<feature type="transmembrane region" description="Helical" evidence="4">
    <location>
        <begin position="441"/>
        <end position="461"/>
    </location>
</feature>
<feature type="topological domain" description="Cytoplasmic" evidence="4">
    <location>
        <begin position="462"/>
        <end position="504"/>
    </location>
</feature>
<feature type="transmembrane region" description="Helical" evidence="4">
    <location>
        <begin position="505"/>
        <end position="525"/>
    </location>
</feature>
<feature type="topological domain" description="Extracellular" evidence="4">
    <location>
        <begin position="526"/>
        <end position="563"/>
    </location>
</feature>
<feature type="transmembrane region" description="Helical" evidence="4">
    <location>
        <begin position="564"/>
        <end position="584"/>
    </location>
</feature>
<feature type="topological domain" description="Cytoplasmic" evidence="4">
    <location>
        <begin position="585"/>
        <end position="599"/>
    </location>
</feature>
<feature type="transmembrane region" description="Helical" evidence="4">
    <location>
        <begin position="600"/>
        <end position="620"/>
    </location>
</feature>
<feature type="topological domain" description="Extracellular" evidence="4">
    <location>
        <begin position="621"/>
        <end position="638"/>
    </location>
</feature>
<feature type="transmembrane region" description="Helical" evidence="4">
    <location>
        <begin position="639"/>
        <end position="659"/>
    </location>
</feature>
<feature type="topological domain" description="Cytoplasmic" evidence="4">
    <location>
        <begin position="660"/>
        <end position="711"/>
    </location>
</feature>
<feature type="modified residue" description="Phosphothreonine" evidence="3">
    <location>
        <position position="14"/>
    </location>
</feature>
<feature type="glycosylation site" description="N-linked (GlcNAc...) asparagine" evidence="4">
    <location>
        <position position="187"/>
    </location>
</feature>
<feature type="glycosylation site" description="N-linked (GlcNAc...) asparagine" evidence="4">
    <location>
        <position position="200"/>
    </location>
</feature>
<feature type="glycosylation site" description="N-linked (GlcNAc...) asparagine" evidence="4">
    <location>
        <position position="417"/>
    </location>
</feature>
<protein>
    <recommendedName>
        <fullName>Choline transporter-like protein 2</fullName>
    </recommendedName>
    <alternativeName>
        <fullName>Solute carrier family 44 member 2</fullName>
    </alternativeName>
</protein>
<sequence>MGDERPHYYGKHGTPQKYDPTFKGPIYNRGCTDVICCVFLLVAIVGYVAVGIIAWTHGDPRKVIYPTDSRGEFCGQEGTKNENKPYLFYFNIVKCASPLVLLEFQCPTPQICVEKCPNRYLTYLNARSSRDFEYYKQFCVPGFKNNKGVAEVLRDGDCPAVLIPSKPLVRRCFPAIHAYKGVLMVGNETTYEDGHGARKNITDLVEGAKKANGVLEARQLAMRIFEDYTVSWYWIIIGLVIAMAMSLLFIILLRFLAGIMVWVMIIMVILVLGYGIFHCYMEYSRLRGEAGSDVSLVDLGFQTDFRVYLHLRQTWLAFMIILSILEVIIILLLIFLRKRILIAIALIKEASRAVGYVMCTMLYPLVTFFLLCLCIAYWASTAVFLSTSNEAVYKIFDDGLCPFTAKTCNPETFPSSNESRQCPNARCQFAFYGGESGYHRALLGLQIFNAFMFFWLANFVLALGQVTLAGAFASYYWALRKPDDLPAFPLFSAFGRALRYHTGSLAFGALILAIVQIIRVILEYLDQRLKAAENKFAKCLMTCLKCCFWCLEKFIKFLNRNAYIMIAIYGTNFCTSARNAFFLLMRNIIRVAVLDKVTDFLFLLGKLLIVGSVGILAFFFFTHRIRIVQDTAPPLNYYWVPILTVIVGSYLIAHGFFSVYGMCVDTLFLCFCEDLERNDGSQERPYFMSPELRDILLKGSAEEGKRAEAEE</sequence>
<gene>
    <name type="primary">SLC44A2</name>
    <name type="synonym">CTL2</name>
</gene>
<dbReference type="EMBL" id="CR860838">
    <property type="protein sequence ID" value="CAH92947.1"/>
    <property type="molecule type" value="mRNA"/>
</dbReference>
<dbReference type="RefSeq" id="NP_001126736.1">
    <property type="nucleotide sequence ID" value="NM_001133264.1"/>
</dbReference>
<dbReference type="SMR" id="Q5R5L9"/>
<dbReference type="FunCoup" id="Q5R5L9">
    <property type="interactions" value="1203"/>
</dbReference>
<dbReference type="STRING" id="9601.ENSPPYP00000010723"/>
<dbReference type="GlyCosmos" id="Q5R5L9">
    <property type="glycosylation" value="3 sites, No reported glycans"/>
</dbReference>
<dbReference type="GeneID" id="100173738"/>
<dbReference type="KEGG" id="pon:100173738"/>
<dbReference type="CTD" id="57153"/>
<dbReference type="InParanoid" id="Q5R5L9"/>
<dbReference type="OrthoDB" id="420519at2759"/>
<dbReference type="Proteomes" id="UP000001595">
    <property type="component" value="Unplaced"/>
</dbReference>
<dbReference type="GO" id="GO:0005741">
    <property type="term" value="C:mitochondrial outer membrane"/>
    <property type="evidence" value="ECO:0000250"/>
    <property type="project" value="UniProtKB"/>
</dbReference>
<dbReference type="GO" id="GO:0005886">
    <property type="term" value="C:plasma membrane"/>
    <property type="evidence" value="ECO:0000250"/>
    <property type="project" value="UniProtKB"/>
</dbReference>
<dbReference type="GO" id="GO:0015297">
    <property type="term" value="F:antiporter activity"/>
    <property type="evidence" value="ECO:0007669"/>
    <property type="project" value="UniProtKB-KW"/>
</dbReference>
<dbReference type="GO" id="GO:0015220">
    <property type="term" value="F:choline transmembrane transporter activity"/>
    <property type="evidence" value="ECO:0000250"/>
    <property type="project" value="UniProtKB"/>
</dbReference>
<dbReference type="GO" id="GO:0034228">
    <property type="term" value="F:ethanolamine transmembrane transporter activity"/>
    <property type="evidence" value="ECO:0000250"/>
    <property type="project" value="UniProtKB"/>
</dbReference>
<dbReference type="GO" id="GO:0015871">
    <property type="term" value="P:choline transport"/>
    <property type="evidence" value="ECO:0000250"/>
    <property type="project" value="UniProtKB"/>
</dbReference>
<dbReference type="GO" id="GO:0034229">
    <property type="term" value="P:ethanolamine transport"/>
    <property type="evidence" value="ECO:0000250"/>
    <property type="project" value="UniProtKB"/>
</dbReference>
<dbReference type="GO" id="GO:0006656">
    <property type="term" value="P:phosphatidylcholine biosynthetic process"/>
    <property type="evidence" value="ECO:0007669"/>
    <property type="project" value="UniProtKB-ARBA"/>
</dbReference>
<dbReference type="InterPro" id="IPR007603">
    <property type="entry name" value="Choline_transptr-like"/>
</dbReference>
<dbReference type="PANTHER" id="PTHR12385">
    <property type="entry name" value="CHOLINE TRANSPORTER-LIKE (SLC FAMILY 44)"/>
    <property type="match status" value="1"/>
</dbReference>
<dbReference type="PANTHER" id="PTHR12385:SF34">
    <property type="entry name" value="CHOLINE TRANSPORTER-LIKE PROTEIN 2"/>
    <property type="match status" value="1"/>
</dbReference>
<dbReference type="Pfam" id="PF04515">
    <property type="entry name" value="Choline_transpo"/>
    <property type="match status" value="1"/>
</dbReference>
<comment type="function">
    <text evidence="3">Choline/H+ antiporter, mainly in mitochodria. Also acts as a low-affinity ethanolamine/H+ antiporter, regulating the supply of extracellular ethanolamine (Etn) for the CDP-Etn pathway, redistribute intracellular Etn and balance the CDP-Cho and CDP-Etn arms of the Kennedy pathway.</text>
</comment>
<comment type="catalytic activity">
    <reaction evidence="3">
        <text>choline(out) + n H(+)(in) = choline(in) + n H(+)(out)</text>
        <dbReference type="Rhea" id="RHEA:75463"/>
        <dbReference type="ChEBI" id="CHEBI:15354"/>
        <dbReference type="ChEBI" id="CHEBI:15378"/>
    </reaction>
</comment>
<comment type="catalytic activity">
    <reaction evidence="3">
        <text>ethanolamine(out) + n H(+)(in) = ethanolamine(in) + n H(+)(out)</text>
        <dbReference type="Rhea" id="RHEA:75467"/>
        <dbReference type="ChEBI" id="CHEBI:15378"/>
        <dbReference type="ChEBI" id="CHEBI:57603"/>
    </reaction>
</comment>
<comment type="subunit">
    <text evidence="3">Interacts with COCH.</text>
</comment>
<comment type="subcellular location">
    <subcellularLocation>
        <location evidence="3">Cell membrane</location>
        <topology evidence="4">Multi-pass membrane protein</topology>
    </subcellularLocation>
    <subcellularLocation>
        <location evidence="3">Mitochondrion outer membrane</location>
        <topology evidence="4">Multi-pass membrane protein</topology>
    </subcellularLocation>
    <text evidence="2">Mainly expressed in mitochondria.</text>
</comment>
<comment type="PTM">
    <text evidence="1">N-glycosylated.</text>
</comment>
<comment type="similarity">
    <text evidence="5">Belongs to the CTL (choline transporter-like) family.</text>
</comment>